<feature type="chain" id="PRO_0000310366" description="Pumilio domain-containing protein P35G2.14">
    <location>
        <begin position="1"/>
        <end position="1065"/>
    </location>
</feature>
<feature type="domain" description="RRM" evidence="1">
    <location>
        <begin position="592"/>
        <end position="666"/>
    </location>
</feature>
<feature type="domain" description="PUM-HD" evidence="2">
    <location>
        <begin position="712"/>
        <end position="1065"/>
    </location>
</feature>
<feature type="repeat" description="Pumilio 1">
    <location>
        <begin position="771"/>
        <end position="808"/>
    </location>
</feature>
<feature type="repeat" description="Pumilio 2">
    <location>
        <begin position="809"/>
        <end position="844"/>
    </location>
</feature>
<feature type="repeat" description="Pumilio 3">
    <location>
        <begin position="846"/>
        <end position="884"/>
    </location>
</feature>
<feature type="repeat" description="Pumilio 4">
    <location>
        <begin position="886"/>
        <end position="917"/>
    </location>
</feature>
<feature type="repeat" description="Pumilio 5">
    <location>
        <begin position="919"/>
        <end position="954"/>
    </location>
</feature>
<feature type="repeat" description="Pumilio 6">
    <location>
        <begin position="956"/>
        <end position="993"/>
    </location>
</feature>
<feature type="region of interest" description="Disordered" evidence="3">
    <location>
        <begin position="1"/>
        <end position="78"/>
    </location>
</feature>
<feature type="region of interest" description="Disordered" evidence="3">
    <location>
        <begin position="130"/>
        <end position="265"/>
    </location>
</feature>
<feature type="region of interest" description="Disordered" evidence="3">
    <location>
        <begin position="422"/>
        <end position="573"/>
    </location>
</feature>
<feature type="compositionally biased region" description="Polar residues" evidence="3">
    <location>
        <begin position="16"/>
        <end position="44"/>
    </location>
</feature>
<feature type="compositionally biased region" description="Low complexity" evidence="3">
    <location>
        <begin position="59"/>
        <end position="77"/>
    </location>
</feature>
<feature type="compositionally biased region" description="Polar residues" evidence="3">
    <location>
        <begin position="134"/>
        <end position="151"/>
    </location>
</feature>
<feature type="compositionally biased region" description="Polar residues" evidence="3">
    <location>
        <begin position="169"/>
        <end position="189"/>
    </location>
</feature>
<feature type="compositionally biased region" description="Low complexity" evidence="3">
    <location>
        <begin position="190"/>
        <end position="224"/>
    </location>
</feature>
<feature type="compositionally biased region" description="Low complexity" evidence="3">
    <location>
        <begin position="236"/>
        <end position="246"/>
    </location>
</feature>
<feature type="compositionally biased region" description="Polar residues" evidence="3">
    <location>
        <begin position="247"/>
        <end position="262"/>
    </location>
</feature>
<feature type="compositionally biased region" description="Polar residues" evidence="3">
    <location>
        <begin position="434"/>
        <end position="455"/>
    </location>
</feature>
<feature type="compositionally biased region" description="Low complexity" evidence="3">
    <location>
        <begin position="470"/>
        <end position="483"/>
    </location>
</feature>
<feature type="compositionally biased region" description="Polar residues" evidence="3">
    <location>
        <begin position="495"/>
        <end position="522"/>
    </location>
</feature>
<feature type="compositionally biased region" description="Polar residues" evidence="3">
    <location>
        <begin position="529"/>
        <end position="551"/>
    </location>
</feature>
<feature type="compositionally biased region" description="Low complexity" evidence="3">
    <location>
        <begin position="559"/>
        <end position="573"/>
    </location>
</feature>
<feature type="modified residue" description="Phosphothreonine" evidence="5">
    <location>
        <position position="260"/>
    </location>
</feature>
<feature type="modified residue" description="Phosphoserine" evidence="5">
    <location>
        <position position="506"/>
    </location>
</feature>
<feature type="modified residue" description="Phosphoserine" evidence="5">
    <location>
        <position position="511"/>
    </location>
</feature>
<feature type="modified residue" description="Phosphoserine" evidence="5">
    <location>
        <position position="515"/>
    </location>
</feature>
<feature type="modified residue" description="Phosphothreonine" evidence="5">
    <location>
        <position position="554"/>
    </location>
</feature>
<reference key="1">
    <citation type="journal article" date="2002" name="Nature">
        <title>The genome sequence of Schizosaccharomyces pombe.</title>
        <authorList>
            <person name="Wood V."/>
            <person name="Gwilliam R."/>
            <person name="Rajandream M.A."/>
            <person name="Lyne M.H."/>
            <person name="Lyne R."/>
            <person name="Stewart A."/>
            <person name="Sgouros J.G."/>
            <person name="Peat N."/>
            <person name="Hayles J."/>
            <person name="Baker S.G."/>
            <person name="Basham D."/>
            <person name="Bowman S."/>
            <person name="Brooks K."/>
            <person name="Brown D."/>
            <person name="Brown S."/>
            <person name="Chillingworth T."/>
            <person name="Churcher C.M."/>
            <person name="Collins M."/>
            <person name="Connor R."/>
            <person name="Cronin A."/>
            <person name="Davis P."/>
            <person name="Feltwell T."/>
            <person name="Fraser A."/>
            <person name="Gentles S."/>
            <person name="Goble A."/>
            <person name="Hamlin N."/>
            <person name="Harris D.E."/>
            <person name="Hidalgo J."/>
            <person name="Hodgson G."/>
            <person name="Holroyd S."/>
            <person name="Hornsby T."/>
            <person name="Howarth S."/>
            <person name="Huckle E.J."/>
            <person name="Hunt S."/>
            <person name="Jagels K."/>
            <person name="James K.D."/>
            <person name="Jones L."/>
            <person name="Jones M."/>
            <person name="Leather S."/>
            <person name="McDonald S."/>
            <person name="McLean J."/>
            <person name="Mooney P."/>
            <person name="Moule S."/>
            <person name="Mungall K.L."/>
            <person name="Murphy L.D."/>
            <person name="Niblett D."/>
            <person name="Odell C."/>
            <person name="Oliver K."/>
            <person name="O'Neil S."/>
            <person name="Pearson D."/>
            <person name="Quail M.A."/>
            <person name="Rabbinowitsch E."/>
            <person name="Rutherford K.M."/>
            <person name="Rutter S."/>
            <person name="Saunders D."/>
            <person name="Seeger K."/>
            <person name="Sharp S."/>
            <person name="Skelton J."/>
            <person name="Simmonds M.N."/>
            <person name="Squares R."/>
            <person name="Squares S."/>
            <person name="Stevens K."/>
            <person name="Taylor K."/>
            <person name="Taylor R.G."/>
            <person name="Tivey A."/>
            <person name="Walsh S.V."/>
            <person name="Warren T."/>
            <person name="Whitehead S."/>
            <person name="Woodward J.R."/>
            <person name="Volckaert G."/>
            <person name="Aert R."/>
            <person name="Robben J."/>
            <person name="Grymonprez B."/>
            <person name="Weltjens I."/>
            <person name="Vanstreels E."/>
            <person name="Rieger M."/>
            <person name="Schaefer M."/>
            <person name="Mueller-Auer S."/>
            <person name="Gabel C."/>
            <person name="Fuchs M."/>
            <person name="Duesterhoeft A."/>
            <person name="Fritzc C."/>
            <person name="Holzer E."/>
            <person name="Moestl D."/>
            <person name="Hilbert H."/>
            <person name="Borzym K."/>
            <person name="Langer I."/>
            <person name="Beck A."/>
            <person name="Lehrach H."/>
            <person name="Reinhardt R."/>
            <person name="Pohl T.M."/>
            <person name="Eger P."/>
            <person name="Zimmermann W."/>
            <person name="Wedler H."/>
            <person name="Wambutt R."/>
            <person name="Purnelle B."/>
            <person name="Goffeau A."/>
            <person name="Cadieu E."/>
            <person name="Dreano S."/>
            <person name="Gloux S."/>
            <person name="Lelaure V."/>
            <person name="Mottier S."/>
            <person name="Galibert F."/>
            <person name="Aves S.J."/>
            <person name="Xiang Z."/>
            <person name="Hunt C."/>
            <person name="Moore K."/>
            <person name="Hurst S.M."/>
            <person name="Lucas M."/>
            <person name="Rochet M."/>
            <person name="Gaillardin C."/>
            <person name="Tallada V.A."/>
            <person name="Garzon A."/>
            <person name="Thode G."/>
            <person name="Daga R.R."/>
            <person name="Cruzado L."/>
            <person name="Jimenez J."/>
            <person name="Sanchez M."/>
            <person name="del Rey F."/>
            <person name="Benito J."/>
            <person name="Dominguez A."/>
            <person name="Revuelta J.L."/>
            <person name="Moreno S."/>
            <person name="Armstrong J."/>
            <person name="Forsburg S.L."/>
            <person name="Cerutti L."/>
            <person name="Lowe T."/>
            <person name="McCombie W.R."/>
            <person name="Paulsen I."/>
            <person name="Potashkin J."/>
            <person name="Shpakovski G.V."/>
            <person name="Ussery D."/>
            <person name="Barrell B.G."/>
            <person name="Nurse P."/>
        </authorList>
    </citation>
    <scope>NUCLEOTIDE SEQUENCE [LARGE SCALE GENOMIC DNA]</scope>
    <source>
        <strain>972 / ATCC 24843</strain>
    </source>
</reference>
<reference key="2">
    <citation type="journal article" date="2011" name="Science">
        <title>Comparative functional genomics of the fission yeasts.</title>
        <authorList>
            <person name="Rhind N."/>
            <person name="Chen Z."/>
            <person name="Yassour M."/>
            <person name="Thompson D.A."/>
            <person name="Haas B.J."/>
            <person name="Habib N."/>
            <person name="Wapinski I."/>
            <person name="Roy S."/>
            <person name="Lin M.F."/>
            <person name="Heiman D.I."/>
            <person name="Young S.K."/>
            <person name="Furuya K."/>
            <person name="Guo Y."/>
            <person name="Pidoux A."/>
            <person name="Chen H.M."/>
            <person name="Robbertse B."/>
            <person name="Goldberg J.M."/>
            <person name="Aoki K."/>
            <person name="Bayne E.H."/>
            <person name="Berlin A.M."/>
            <person name="Desjardins C.A."/>
            <person name="Dobbs E."/>
            <person name="Dukaj L."/>
            <person name="Fan L."/>
            <person name="FitzGerald M.G."/>
            <person name="French C."/>
            <person name="Gujja S."/>
            <person name="Hansen K."/>
            <person name="Keifenheim D."/>
            <person name="Levin J.Z."/>
            <person name="Mosher R.A."/>
            <person name="Mueller C.A."/>
            <person name="Pfiffner J."/>
            <person name="Priest M."/>
            <person name="Russ C."/>
            <person name="Smialowska A."/>
            <person name="Swoboda P."/>
            <person name="Sykes S.M."/>
            <person name="Vaughn M."/>
            <person name="Vengrova S."/>
            <person name="Yoder R."/>
            <person name="Zeng Q."/>
            <person name="Allshire R."/>
            <person name="Baulcombe D."/>
            <person name="Birren B.W."/>
            <person name="Brown W."/>
            <person name="Ekwall K."/>
            <person name="Kellis M."/>
            <person name="Leatherwood J."/>
            <person name="Levin H."/>
            <person name="Margalit H."/>
            <person name="Martienssen R."/>
            <person name="Nieduszynski C.A."/>
            <person name="Spatafora J.W."/>
            <person name="Friedman N."/>
            <person name="Dalgaard J.Z."/>
            <person name="Baumann P."/>
            <person name="Niki H."/>
            <person name="Regev A."/>
            <person name="Nusbaum C."/>
        </authorList>
    </citation>
    <scope>REVISION OF GENE MODEL</scope>
</reference>
<reference key="3">
    <citation type="journal article" date="2006" name="Nat. Biotechnol.">
        <title>ORFeome cloning and global analysis of protein localization in the fission yeast Schizosaccharomyces pombe.</title>
        <authorList>
            <person name="Matsuyama A."/>
            <person name="Arai R."/>
            <person name="Yashiroda Y."/>
            <person name="Shirai A."/>
            <person name="Kamata A."/>
            <person name="Sekido S."/>
            <person name="Kobayashi Y."/>
            <person name="Hashimoto A."/>
            <person name="Hamamoto M."/>
            <person name="Hiraoka Y."/>
            <person name="Horinouchi S."/>
            <person name="Yoshida M."/>
        </authorList>
    </citation>
    <scope>SUBCELLULAR LOCATION [LARGE SCALE ANALYSIS]</scope>
</reference>
<reference key="4">
    <citation type="journal article" date="2008" name="J. Proteome Res.">
        <title>Phosphoproteome analysis of fission yeast.</title>
        <authorList>
            <person name="Wilson-Grady J.T."/>
            <person name="Villen J."/>
            <person name="Gygi S.P."/>
        </authorList>
    </citation>
    <scope>PHOSPHORYLATION [LARGE SCALE ANALYSIS] AT THR-260; SER-506; SER-511; SER-515 AND THR-554</scope>
    <scope>IDENTIFICATION BY MASS SPECTROMETRY</scope>
</reference>
<protein>
    <recommendedName>
        <fullName>Pumilio domain-containing protein P35G2.14</fullName>
    </recommendedName>
</protein>
<proteinExistence type="evidence at protein level"/>
<accession>Q9P789</accession>
<keyword id="KW-0963">Cytoplasm</keyword>
<keyword id="KW-0597">Phosphoprotein</keyword>
<keyword id="KW-1185">Reference proteome</keyword>
<keyword id="KW-0677">Repeat</keyword>
<keyword id="KW-0694">RNA-binding</keyword>
<comment type="subcellular location">
    <subcellularLocation>
        <location evidence="4">Cytoplasm</location>
    </subcellularLocation>
</comment>
<organism>
    <name type="scientific">Schizosaccharomyces pombe (strain 972 / ATCC 24843)</name>
    <name type="common">Fission yeast</name>
    <dbReference type="NCBI Taxonomy" id="284812"/>
    <lineage>
        <taxon>Eukaryota</taxon>
        <taxon>Fungi</taxon>
        <taxon>Dikarya</taxon>
        <taxon>Ascomycota</taxon>
        <taxon>Taphrinomycotina</taxon>
        <taxon>Schizosaccharomycetes</taxon>
        <taxon>Schizosaccharomycetales</taxon>
        <taxon>Schizosaccharomycetaceae</taxon>
        <taxon>Schizosaccharomyces</taxon>
    </lineage>
</organism>
<evidence type="ECO:0000255" key="1">
    <source>
        <dbReference type="PROSITE-ProRule" id="PRU00176"/>
    </source>
</evidence>
<evidence type="ECO:0000255" key="2">
    <source>
        <dbReference type="PROSITE-ProRule" id="PRU00318"/>
    </source>
</evidence>
<evidence type="ECO:0000256" key="3">
    <source>
        <dbReference type="SAM" id="MobiDB-lite"/>
    </source>
</evidence>
<evidence type="ECO:0000269" key="4">
    <source>
    </source>
</evidence>
<evidence type="ECO:0000269" key="5">
    <source>
    </source>
</evidence>
<gene>
    <name type="ORF">SPBP35G2.14</name>
</gene>
<dbReference type="EMBL" id="CU329671">
    <property type="protein sequence ID" value="CAB87376.2"/>
    <property type="molecule type" value="Genomic_DNA"/>
</dbReference>
<dbReference type="SMR" id="Q9P789"/>
<dbReference type="BioGRID" id="277835">
    <property type="interactions" value="69"/>
</dbReference>
<dbReference type="FunCoup" id="Q9P789">
    <property type="interactions" value="13"/>
</dbReference>
<dbReference type="STRING" id="284812.Q9P789"/>
<dbReference type="iPTMnet" id="Q9P789"/>
<dbReference type="PaxDb" id="4896-SPBP35G2.14.1"/>
<dbReference type="EnsemblFungi" id="SPBP35G2.14.1">
    <property type="protein sequence ID" value="SPBP35G2.14.1:pep"/>
    <property type="gene ID" value="SPBP35G2.14"/>
</dbReference>
<dbReference type="KEGG" id="spo:2541323"/>
<dbReference type="PomBase" id="SPBP35G2.14"/>
<dbReference type="VEuPathDB" id="FungiDB:SPBP35G2.14"/>
<dbReference type="eggNOG" id="KOG4574">
    <property type="taxonomic scope" value="Eukaryota"/>
</dbReference>
<dbReference type="HOGENOM" id="CLU_290869_0_0_1"/>
<dbReference type="InParanoid" id="Q9P789"/>
<dbReference type="OMA" id="IVRVCTH"/>
<dbReference type="PRO" id="PR:Q9P789"/>
<dbReference type="Proteomes" id="UP000002485">
    <property type="component" value="Chromosome II"/>
</dbReference>
<dbReference type="GO" id="GO:0005737">
    <property type="term" value="C:cytoplasm"/>
    <property type="evidence" value="ECO:0007005"/>
    <property type="project" value="PomBase"/>
</dbReference>
<dbReference type="GO" id="GO:0010494">
    <property type="term" value="C:cytoplasmic stress granule"/>
    <property type="evidence" value="ECO:0000269"/>
    <property type="project" value="PomBase"/>
</dbReference>
<dbReference type="GO" id="GO:0005829">
    <property type="term" value="C:cytosol"/>
    <property type="evidence" value="ECO:0007005"/>
    <property type="project" value="PomBase"/>
</dbReference>
<dbReference type="GO" id="GO:0000932">
    <property type="term" value="C:P-body"/>
    <property type="evidence" value="ECO:0000269"/>
    <property type="project" value="PomBase"/>
</dbReference>
<dbReference type="GO" id="GO:0035925">
    <property type="term" value="F:mRNA 3'-UTR AU-rich region binding"/>
    <property type="evidence" value="ECO:0000318"/>
    <property type="project" value="GO_Central"/>
</dbReference>
<dbReference type="GO" id="GO:0000288">
    <property type="term" value="P:nuclear-transcribed mRNA catabolic process, deadenylation-dependent decay"/>
    <property type="evidence" value="ECO:0000318"/>
    <property type="project" value="GO_Central"/>
</dbReference>
<dbReference type="GO" id="GO:0034063">
    <property type="term" value="P:stress granule assembly"/>
    <property type="evidence" value="ECO:0000315"/>
    <property type="project" value="PomBase"/>
</dbReference>
<dbReference type="CDD" id="cd00590">
    <property type="entry name" value="RRM_SF"/>
    <property type="match status" value="1"/>
</dbReference>
<dbReference type="FunFam" id="1.25.10.10:FF:000475">
    <property type="entry name" value="Unplaced genomic scaffold supercont1.2, whole genome shotgun sequence"/>
    <property type="match status" value="1"/>
</dbReference>
<dbReference type="Gene3D" id="3.30.70.330">
    <property type="match status" value="1"/>
</dbReference>
<dbReference type="Gene3D" id="1.25.10.10">
    <property type="entry name" value="Leucine-rich Repeat Variant"/>
    <property type="match status" value="1"/>
</dbReference>
<dbReference type="InterPro" id="IPR011989">
    <property type="entry name" value="ARM-like"/>
</dbReference>
<dbReference type="InterPro" id="IPR016024">
    <property type="entry name" value="ARM-type_fold"/>
</dbReference>
<dbReference type="InterPro" id="IPR012677">
    <property type="entry name" value="Nucleotide-bd_a/b_plait_sf"/>
</dbReference>
<dbReference type="InterPro" id="IPR033133">
    <property type="entry name" value="PUM-HD"/>
</dbReference>
<dbReference type="InterPro" id="IPR052645">
    <property type="entry name" value="Pumilio_domain_protein"/>
</dbReference>
<dbReference type="InterPro" id="IPR001313">
    <property type="entry name" value="Pumilio_RNA-bd_rpt"/>
</dbReference>
<dbReference type="InterPro" id="IPR035979">
    <property type="entry name" value="RBD_domain_sf"/>
</dbReference>
<dbReference type="InterPro" id="IPR000504">
    <property type="entry name" value="RRM_dom"/>
</dbReference>
<dbReference type="PANTHER" id="PTHR47093">
    <property type="entry name" value="PROTEIN JSN1-RELATED"/>
    <property type="match status" value="1"/>
</dbReference>
<dbReference type="PANTHER" id="PTHR47093:SF2">
    <property type="entry name" value="PUMILIO DOMAIN-CONTAINING PROTEIN P35G2.14"/>
    <property type="match status" value="1"/>
</dbReference>
<dbReference type="Pfam" id="PF00806">
    <property type="entry name" value="PUF"/>
    <property type="match status" value="3"/>
</dbReference>
<dbReference type="Pfam" id="PF00076">
    <property type="entry name" value="RRM_1"/>
    <property type="match status" value="1"/>
</dbReference>
<dbReference type="SMART" id="SM00025">
    <property type="entry name" value="Pumilio"/>
    <property type="match status" value="5"/>
</dbReference>
<dbReference type="SMART" id="SM00360">
    <property type="entry name" value="RRM"/>
    <property type="match status" value="1"/>
</dbReference>
<dbReference type="SUPFAM" id="SSF48371">
    <property type="entry name" value="ARM repeat"/>
    <property type="match status" value="1"/>
</dbReference>
<dbReference type="SUPFAM" id="SSF54928">
    <property type="entry name" value="RNA-binding domain, RBD"/>
    <property type="match status" value="1"/>
</dbReference>
<dbReference type="PROSITE" id="PS50302">
    <property type="entry name" value="PUM"/>
    <property type="match status" value="6"/>
</dbReference>
<dbReference type="PROSITE" id="PS50303">
    <property type="entry name" value="PUM_HD"/>
    <property type="match status" value="1"/>
</dbReference>
<dbReference type="PROSITE" id="PS50102">
    <property type="entry name" value="RRM"/>
    <property type="match status" value="1"/>
</dbReference>
<sequence>MHQDAMQGSIYEGSRRNTISKPSNNNPPLDMSSLNNDFGQQLDSLATGVGSGSLNGTTNPSSNFNDSNRSNISSSLRSEMEMSNNLLKNTQNDTWTSTVGLSVPENQEAMNFNEGPTGISSIASKNNSSITSKLQNNSNLSVTSSANRGRTSSVSSSYDPSFPWGPRMSSVSSGKQHLSSLSLHTHFNPSSSSTVSSDSLESSQQKAPSSSSTATPASAASEIISNKDPVVEPTHSASNAANSGSNTIRARQTTRTRSNTLPWSPRVFGPTLGYNTPPFGYPPTTSSALPNASGSSSSFFGLPTAVSASAGTSFSDISPAAPKASLENNIASNASSLLNPVGLDHFSAASGWSRDFNHLPASSLATARSSLTGNAKSGIDSSVTGMPSDNYARVVESSTAEFFDPSLASSFGLTNYRTKPLTTGFNHPRPQGHGLNTSLFNTSSGGSLKSPTFEVSNRLGDVDTVPDLPPLGSLSSRPKPSSSSRRRSQSLSAMLKTSNPYMPSPSLLSGSLANSSEHSSSPRLRGSPIHNQPVSSSKSTASLNTNNNGLRASTPEMANISTRSSSESNNTNSWPTVGDATIENLTQHEPTHALWVGNLPSGVSATTVATTFSAYGTVSSIRMLSHKHSAFLNFDSVETAKHVLEELNGKRIFFGSDPVCISFAKVASSSSESSHSAVDGLNKAFSNVSFVPSLREVYDDLINVVQSFGFKDLSKIYQILNAACELTDFAAQIPSISKAFSSRRLNAPKLRQVRKRIDNGLCTQEEVEDIAINWLDEVSDLSSDHLGNTVVQKLFDYCSDPVKEMMLERIAPHLAQIGIHKNGTWAAQKIVDVASTEAQMRLIAKHLQPYIPLLFADQFGNYVVQTCLKFGAPMNDFVFEAILNQFWVIAQSRYGSRAVRACLESPDVTEEQRVLVAAAITVYSVHLAMNGNGTLLLTYLVENMNYPHIPILLTRRFVQDIVRVCTHRLAYNSLLKIISISQGDTACGDLVVDAILDTQNDLNPNSLEKILFEQTYGPSFICKLLTHENISASHRQQLQSAVRNVLGTMEDRGSSELKKLAEVCA</sequence>
<name>YN8E_SCHPO</name>